<evidence type="ECO:0000250" key="1"/>
<evidence type="ECO:0000255" key="2">
    <source>
        <dbReference type="HAMAP-Rule" id="MF_00047"/>
    </source>
</evidence>
<comment type="function">
    <text evidence="2">Cell wall formation.</text>
</comment>
<comment type="catalytic activity">
    <reaction evidence="2">
        <text>2 D-alanine + ATP = D-alanyl-D-alanine + ADP + phosphate + H(+)</text>
        <dbReference type="Rhea" id="RHEA:11224"/>
        <dbReference type="ChEBI" id="CHEBI:15378"/>
        <dbReference type="ChEBI" id="CHEBI:30616"/>
        <dbReference type="ChEBI" id="CHEBI:43474"/>
        <dbReference type="ChEBI" id="CHEBI:57416"/>
        <dbReference type="ChEBI" id="CHEBI:57822"/>
        <dbReference type="ChEBI" id="CHEBI:456216"/>
        <dbReference type="EC" id="6.3.2.4"/>
    </reaction>
</comment>
<comment type="cofactor">
    <cofactor evidence="1">
        <name>Mg(2+)</name>
        <dbReference type="ChEBI" id="CHEBI:18420"/>
    </cofactor>
    <cofactor evidence="1">
        <name>Mn(2+)</name>
        <dbReference type="ChEBI" id="CHEBI:29035"/>
    </cofactor>
    <text evidence="1">Binds 2 magnesium or manganese ions per subunit.</text>
</comment>
<comment type="pathway">
    <text evidence="2">Cell wall biogenesis; peptidoglycan biosynthesis.</text>
</comment>
<comment type="subcellular location">
    <subcellularLocation>
        <location evidence="2">Cytoplasm</location>
    </subcellularLocation>
</comment>
<comment type="similarity">
    <text evidence="2">Belongs to the D-alanine--D-alanine ligase family.</text>
</comment>
<organism>
    <name type="scientific">Streptococcus equi subsp. zooepidemicus (strain MGCS10565)</name>
    <dbReference type="NCBI Taxonomy" id="552526"/>
    <lineage>
        <taxon>Bacteria</taxon>
        <taxon>Bacillati</taxon>
        <taxon>Bacillota</taxon>
        <taxon>Bacilli</taxon>
        <taxon>Lactobacillales</taxon>
        <taxon>Streptococcaceae</taxon>
        <taxon>Streptococcus</taxon>
    </lineage>
</organism>
<name>DDL_STREM</name>
<protein>
    <recommendedName>
        <fullName evidence="2">D-alanine--D-alanine ligase</fullName>
        <ecNumber evidence="2">6.3.2.4</ecNumber>
    </recommendedName>
    <alternativeName>
        <fullName evidence="2">D-Ala-D-Ala ligase</fullName>
    </alternativeName>
    <alternativeName>
        <fullName evidence="2">D-alanylalanine synthetase</fullName>
    </alternativeName>
</protein>
<accession>B4U1Z2</accession>
<dbReference type="EC" id="6.3.2.4" evidence="2"/>
<dbReference type="EMBL" id="CP001129">
    <property type="protein sequence ID" value="ACG62009.1"/>
    <property type="molecule type" value="Genomic_DNA"/>
</dbReference>
<dbReference type="RefSeq" id="WP_012515285.1">
    <property type="nucleotide sequence ID" value="NC_011134.1"/>
</dbReference>
<dbReference type="SMR" id="B4U1Z2"/>
<dbReference type="KEGG" id="sez:Sez_0642"/>
<dbReference type="HOGENOM" id="CLU_039268_0_0_9"/>
<dbReference type="UniPathway" id="UPA00219"/>
<dbReference type="Proteomes" id="UP000001873">
    <property type="component" value="Chromosome"/>
</dbReference>
<dbReference type="GO" id="GO:0005829">
    <property type="term" value="C:cytosol"/>
    <property type="evidence" value="ECO:0007669"/>
    <property type="project" value="TreeGrafter"/>
</dbReference>
<dbReference type="GO" id="GO:0005524">
    <property type="term" value="F:ATP binding"/>
    <property type="evidence" value="ECO:0007669"/>
    <property type="project" value="UniProtKB-KW"/>
</dbReference>
<dbReference type="GO" id="GO:0008716">
    <property type="term" value="F:D-alanine-D-alanine ligase activity"/>
    <property type="evidence" value="ECO:0007669"/>
    <property type="project" value="UniProtKB-UniRule"/>
</dbReference>
<dbReference type="GO" id="GO:0046872">
    <property type="term" value="F:metal ion binding"/>
    <property type="evidence" value="ECO:0007669"/>
    <property type="project" value="UniProtKB-KW"/>
</dbReference>
<dbReference type="GO" id="GO:0071555">
    <property type="term" value="P:cell wall organization"/>
    <property type="evidence" value="ECO:0007669"/>
    <property type="project" value="UniProtKB-KW"/>
</dbReference>
<dbReference type="GO" id="GO:0009252">
    <property type="term" value="P:peptidoglycan biosynthetic process"/>
    <property type="evidence" value="ECO:0007669"/>
    <property type="project" value="UniProtKB-UniRule"/>
</dbReference>
<dbReference type="GO" id="GO:0008360">
    <property type="term" value="P:regulation of cell shape"/>
    <property type="evidence" value="ECO:0007669"/>
    <property type="project" value="UniProtKB-KW"/>
</dbReference>
<dbReference type="FunFam" id="3.30.1490.20:FF:000007">
    <property type="entry name" value="D-alanine--D-alanine ligase"/>
    <property type="match status" value="1"/>
</dbReference>
<dbReference type="FunFam" id="3.30.470.20:FF:000008">
    <property type="entry name" value="D-alanine--D-alanine ligase"/>
    <property type="match status" value="1"/>
</dbReference>
<dbReference type="Gene3D" id="3.40.50.20">
    <property type="match status" value="1"/>
</dbReference>
<dbReference type="Gene3D" id="3.30.1490.20">
    <property type="entry name" value="ATP-grasp fold, A domain"/>
    <property type="match status" value="1"/>
</dbReference>
<dbReference type="Gene3D" id="3.30.470.20">
    <property type="entry name" value="ATP-grasp fold, B domain"/>
    <property type="match status" value="1"/>
</dbReference>
<dbReference type="HAMAP" id="MF_00047">
    <property type="entry name" value="Dala_Dala_lig"/>
    <property type="match status" value="1"/>
</dbReference>
<dbReference type="InterPro" id="IPR011761">
    <property type="entry name" value="ATP-grasp"/>
</dbReference>
<dbReference type="InterPro" id="IPR013815">
    <property type="entry name" value="ATP_grasp_subdomain_1"/>
</dbReference>
<dbReference type="InterPro" id="IPR000291">
    <property type="entry name" value="D-Ala_lig_Van_CS"/>
</dbReference>
<dbReference type="InterPro" id="IPR005905">
    <property type="entry name" value="D_ala_D_ala"/>
</dbReference>
<dbReference type="InterPro" id="IPR011095">
    <property type="entry name" value="Dala_Dala_lig_C"/>
</dbReference>
<dbReference type="InterPro" id="IPR011127">
    <property type="entry name" value="Dala_Dala_lig_N"/>
</dbReference>
<dbReference type="InterPro" id="IPR016185">
    <property type="entry name" value="PreATP-grasp_dom_sf"/>
</dbReference>
<dbReference type="NCBIfam" id="TIGR01205">
    <property type="entry name" value="D_ala_D_alaTIGR"/>
    <property type="match status" value="1"/>
</dbReference>
<dbReference type="NCBIfam" id="NF002528">
    <property type="entry name" value="PRK01966.1-4"/>
    <property type="match status" value="1"/>
</dbReference>
<dbReference type="NCBIfam" id="NF002529">
    <property type="entry name" value="PRK01966.1-5"/>
    <property type="match status" value="1"/>
</dbReference>
<dbReference type="PANTHER" id="PTHR23132">
    <property type="entry name" value="D-ALANINE--D-ALANINE LIGASE"/>
    <property type="match status" value="1"/>
</dbReference>
<dbReference type="PANTHER" id="PTHR23132:SF25">
    <property type="entry name" value="D-ALANINE--D-ALANINE LIGASE A"/>
    <property type="match status" value="1"/>
</dbReference>
<dbReference type="Pfam" id="PF07478">
    <property type="entry name" value="Dala_Dala_lig_C"/>
    <property type="match status" value="1"/>
</dbReference>
<dbReference type="Pfam" id="PF01820">
    <property type="entry name" value="Dala_Dala_lig_N"/>
    <property type="match status" value="1"/>
</dbReference>
<dbReference type="PIRSF" id="PIRSF039102">
    <property type="entry name" value="Ddl/VanB"/>
    <property type="match status" value="1"/>
</dbReference>
<dbReference type="SUPFAM" id="SSF56059">
    <property type="entry name" value="Glutathione synthetase ATP-binding domain-like"/>
    <property type="match status" value="1"/>
</dbReference>
<dbReference type="SUPFAM" id="SSF52440">
    <property type="entry name" value="PreATP-grasp domain"/>
    <property type="match status" value="1"/>
</dbReference>
<dbReference type="PROSITE" id="PS50975">
    <property type="entry name" value="ATP_GRASP"/>
    <property type="match status" value="1"/>
</dbReference>
<dbReference type="PROSITE" id="PS00843">
    <property type="entry name" value="DALA_DALA_LIGASE_1"/>
    <property type="match status" value="1"/>
</dbReference>
<dbReference type="PROSITE" id="PS00844">
    <property type="entry name" value="DALA_DALA_LIGASE_2"/>
    <property type="match status" value="1"/>
</dbReference>
<gene>
    <name evidence="2" type="primary">ddl</name>
    <name type="ordered locus">Sez_0642</name>
</gene>
<feature type="chain" id="PRO_1000116639" description="D-alanine--D-alanine ligase">
    <location>
        <begin position="1"/>
        <end position="348"/>
    </location>
</feature>
<feature type="domain" description="ATP-grasp" evidence="2">
    <location>
        <begin position="132"/>
        <end position="334"/>
    </location>
</feature>
<feature type="binding site" evidence="2">
    <location>
        <begin position="162"/>
        <end position="217"/>
    </location>
    <ligand>
        <name>ATP</name>
        <dbReference type="ChEBI" id="CHEBI:30616"/>
    </ligand>
</feature>
<feature type="binding site" evidence="2">
    <location>
        <position position="288"/>
    </location>
    <ligand>
        <name>Mg(2+)</name>
        <dbReference type="ChEBI" id="CHEBI:18420"/>
        <label>1</label>
    </ligand>
</feature>
<feature type="binding site" evidence="2">
    <location>
        <position position="301"/>
    </location>
    <ligand>
        <name>Mg(2+)</name>
        <dbReference type="ChEBI" id="CHEBI:18420"/>
        <label>1</label>
    </ligand>
</feature>
<feature type="binding site" evidence="2">
    <location>
        <position position="301"/>
    </location>
    <ligand>
        <name>Mg(2+)</name>
        <dbReference type="ChEBI" id="CHEBI:18420"/>
        <label>2</label>
    </ligand>
</feature>
<feature type="binding site" evidence="2">
    <location>
        <position position="303"/>
    </location>
    <ligand>
        <name>Mg(2+)</name>
        <dbReference type="ChEBI" id="CHEBI:18420"/>
        <label>2</label>
    </ligand>
</feature>
<sequence>MSKQTLILLYGGRSAEREVSVLSAESVMRAIDYTKFFVKTYFISQTGQFIKTQEFSSQPAATERLMTNATIRLEQQIRPSDIYEEGAVVFPVLHGPMGEDGSIQGFLEVLKMPYVGTNILSSSVAMDKITTKRVLESADIPQVAYTVYIEGQDLDRCLAETEAVLSYPVFVKPANMGSSVGISKAESEEELRAAILLALTYDSRILIEQGVLAREIEVGLLGNTDVKSTLPGEVVKNVDFYDYQAKYIDNEITMAIPAAIDESAMTSMRTYAETAFKAIGACGLSRCDFFLGQDGQIYLNELNTMPGFTQWSMYPLLWEHMGLSYAELIEELVRLAQEMFEKREGHLI</sequence>
<proteinExistence type="inferred from homology"/>
<keyword id="KW-0067">ATP-binding</keyword>
<keyword id="KW-0133">Cell shape</keyword>
<keyword id="KW-0961">Cell wall biogenesis/degradation</keyword>
<keyword id="KW-0963">Cytoplasm</keyword>
<keyword id="KW-0436">Ligase</keyword>
<keyword id="KW-0460">Magnesium</keyword>
<keyword id="KW-0464">Manganese</keyword>
<keyword id="KW-0479">Metal-binding</keyword>
<keyword id="KW-0547">Nucleotide-binding</keyword>
<keyword id="KW-0573">Peptidoglycan synthesis</keyword>
<reference key="1">
    <citation type="journal article" date="2008" name="PLoS ONE">
        <title>Genome sequence of a lancefield group C Streptococcus zooepidemicus strain causing epidemic nephritis: new information about an old disease.</title>
        <authorList>
            <person name="Beres S.B."/>
            <person name="Sesso R."/>
            <person name="Pinto S.W.L."/>
            <person name="Hoe N.P."/>
            <person name="Porcella S.F."/>
            <person name="Deleo F.R."/>
            <person name="Musser J.M."/>
        </authorList>
    </citation>
    <scope>NUCLEOTIDE SEQUENCE [LARGE SCALE GENOMIC DNA]</scope>
    <source>
        <strain>MGCS10565</strain>
    </source>
</reference>